<evidence type="ECO:0000250" key="1"/>
<evidence type="ECO:0000255" key="2"/>
<evidence type="ECO:0000305" key="3"/>
<evidence type="ECO:0007829" key="4">
    <source>
        <dbReference type="PDB" id="4A57"/>
    </source>
</evidence>
<evidence type="ECO:0007829" key="5">
    <source>
        <dbReference type="PDB" id="4A59"/>
    </source>
</evidence>
<evidence type="ECO:0007829" key="6">
    <source>
        <dbReference type="PDB" id="4A5A"/>
    </source>
</evidence>
<feature type="signal peptide">
    <location>
        <begin position="1"/>
        <end position="25"/>
    </location>
</feature>
<feature type="chain" id="PRO_0000019911" description="Nucleoside-triphosphatase 1">
    <location>
        <begin position="26"/>
        <end position="628"/>
    </location>
</feature>
<feature type="active site" description="Proton acceptor" evidence="1">
    <location>
        <position position="236"/>
    </location>
</feature>
<feature type="glycosylation site" description="N-linked (GlcNAc...) asparagine" evidence="2">
    <location>
        <position position="432"/>
    </location>
</feature>
<feature type="helix" evidence="4">
    <location>
        <begin position="38"/>
        <end position="57"/>
    </location>
</feature>
<feature type="strand" evidence="4">
    <location>
        <begin position="60"/>
        <end position="71"/>
    </location>
</feature>
<feature type="strand" evidence="4">
    <location>
        <begin position="76"/>
        <end position="88"/>
    </location>
</feature>
<feature type="turn" evidence="4">
    <location>
        <begin position="89"/>
        <end position="91"/>
    </location>
</feature>
<feature type="strand" evidence="4">
    <location>
        <begin position="92"/>
        <end position="95"/>
    </location>
</feature>
<feature type="helix" evidence="4">
    <location>
        <begin position="97"/>
        <end position="99"/>
    </location>
</feature>
<feature type="strand" evidence="4">
    <location>
        <begin position="101"/>
        <end position="105"/>
    </location>
</feature>
<feature type="helix" evidence="4">
    <location>
        <begin position="112"/>
        <end position="123"/>
    </location>
</feature>
<feature type="turn" evidence="4">
    <location>
        <begin position="126"/>
        <end position="130"/>
    </location>
</feature>
<feature type="helix" evidence="4">
    <location>
        <begin position="135"/>
        <end position="141"/>
    </location>
</feature>
<feature type="helix" evidence="4">
    <location>
        <begin position="142"/>
        <end position="167"/>
    </location>
</feature>
<feature type="helix" evidence="4">
    <location>
        <begin position="170"/>
        <end position="179"/>
    </location>
</feature>
<feature type="strand" evidence="4">
    <location>
        <begin position="181"/>
        <end position="187"/>
    </location>
</feature>
<feature type="helix" evidence="6">
    <location>
        <begin position="189"/>
        <end position="192"/>
    </location>
</feature>
<feature type="helix" evidence="4">
    <location>
        <begin position="198"/>
        <end position="210"/>
    </location>
</feature>
<feature type="helix" evidence="4">
    <location>
        <begin position="215"/>
        <end position="217"/>
    </location>
</feature>
<feature type="turn" evidence="4">
    <location>
        <begin position="225"/>
        <end position="227"/>
    </location>
</feature>
<feature type="strand" evidence="4">
    <location>
        <begin position="228"/>
        <end position="230"/>
    </location>
</feature>
<feature type="helix" evidence="4">
    <location>
        <begin position="233"/>
        <end position="247"/>
    </location>
</feature>
<feature type="strand" evidence="4">
    <location>
        <begin position="252"/>
        <end position="254"/>
    </location>
</feature>
<feature type="strand" evidence="4">
    <location>
        <begin position="256"/>
        <end position="260"/>
    </location>
</feature>
<feature type="strand" evidence="5">
    <location>
        <begin position="262"/>
        <end position="264"/>
    </location>
</feature>
<feature type="strand" evidence="4">
    <location>
        <begin position="266"/>
        <end position="269"/>
    </location>
</feature>
<feature type="strand" evidence="4">
    <location>
        <begin position="274"/>
        <end position="278"/>
    </location>
</feature>
<feature type="strand" evidence="4">
    <location>
        <begin position="283"/>
        <end position="288"/>
    </location>
</feature>
<feature type="turn" evidence="4">
    <location>
        <begin position="304"/>
        <end position="308"/>
    </location>
</feature>
<feature type="strand" evidence="4">
    <location>
        <begin position="318"/>
        <end position="324"/>
    </location>
</feature>
<feature type="helix" evidence="4">
    <location>
        <begin position="325"/>
        <end position="327"/>
    </location>
</feature>
<feature type="helix" evidence="4">
    <location>
        <begin position="329"/>
        <end position="340"/>
    </location>
</feature>
<feature type="turn" evidence="4">
    <location>
        <begin position="344"/>
        <end position="346"/>
    </location>
</feature>
<feature type="strand" evidence="4">
    <location>
        <begin position="351"/>
        <end position="354"/>
    </location>
</feature>
<feature type="strand" evidence="4">
    <location>
        <begin position="362"/>
        <end position="368"/>
    </location>
</feature>
<feature type="strand" evidence="4">
    <location>
        <begin position="370"/>
        <end position="372"/>
    </location>
</feature>
<feature type="strand" evidence="4">
    <location>
        <begin position="378"/>
        <end position="380"/>
    </location>
</feature>
<feature type="helix" evidence="4">
    <location>
        <begin position="384"/>
        <end position="386"/>
    </location>
</feature>
<feature type="helix" evidence="4">
    <location>
        <begin position="390"/>
        <end position="395"/>
    </location>
</feature>
<feature type="helix" evidence="4">
    <location>
        <begin position="401"/>
        <end position="404"/>
    </location>
</feature>
<feature type="helix" evidence="4">
    <location>
        <begin position="409"/>
        <end position="414"/>
    </location>
</feature>
<feature type="turn" evidence="4">
    <location>
        <begin position="415"/>
        <end position="417"/>
    </location>
</feature>
<feature type="helix" evidence="4">
    <location>
        <begin position="424"/>
        <end position="428"/>
    </location>
</feature>
<feature type="strand" evidence="4">
    <location>
        <begin position="435"/>
        <end position="438"/>
    </location>
</feature>
<feature type="helix" evidence="4">
    <location>
        <begin position="442"/>
        <end position="452"/>
    </location>
</feature>
<feature type="helix" evidence="6">
    <location>
        <begin position="464"/>
        <end position="468"/>
    </location>
</feature>
<feature type="helix" evidence="4">
    <location>
        <begin position="474"/>
        <end position="480"/>
    </location>
</feature>
<feature type="strand" evidence="4">
    <location>
        <begin position="487"/>
        <end position="490"/>
    </location>
</feature>
<feature type="helix" evidence="4">
    <location>
        <begin position="492"/>
        <end position="503"/>
    </location>
</feature>
<feature type="helix" evidence="4">
    <location>
        <begin position="515"/>
        <end position="526"/>
    </location>
</feature>
<feature type="strand" evidence="4">
    <location>
        <begin position="529"/>
        <end position="533"/>
    </location>
</feature>
<feature type="strand" evidence="4">
    <location>
        <begin position="536"/>
        <end position="540"/>
    </location>
</feature>
<feature type="strand" evidence="4">
    <location>
        <begin position="547"/>
        <end position="549"/>
    </location>
</feature>
<feature type="turn" evidence="4">
    <location>
        <begin position="552"/>
        <end position="556"/>
    </location>
</feature>
<feature type="helix" evidence="4">
    <location>
        <begin position="557"/>
        <end position="573"/>
    </location>
</feature>
<feature type="strand" evidence="4">
    <location>
        <begin position="574"/>
        <end position="576"/>
    </location>
</feature>
<feature type="strand" evidence="4">
    <location>
        <begin position="581"/>
        <end position="583"/>
    </location>
</feature>
<feature type="strand" evidence="6">
    <location>
        <begin position="590"/>
        <end position="593"/>
    </location>
</feature>
<feature type="strand" evidence="4">
    <location>
        <begin position="598"/>
        <end position="600"/>
    </location>
</feature>
<feature type="helix" evidence="4">
    <location>
        <begin position="601"/>
        <end position="609"/>
    </location>
</feature>
<feature type="helix" evidence="4">
    <location>
        <begin position="612"/>
        <end position="619"/>
    </location>
</feature>
<feature type="turn" evidence="4">
    <location>
        <begin position="620"/>
        <end position="623"/>
    </location>
</feature>
<feature type="helix" evidence="4">
    <location>
        <begin position="624"/>
        <end position="627"/>
    </location>
</feature>
<reference key="1">
    <citation type="journal article" date="1995" name="J. Biol. Chem.">
        <title>Biochemical and molecular characterization of nucleoside triphosphate hydrolase isozymes from the parasitic protozoan Toxoplasma gondii.</title>
        <authorList>
            <person name="Asai T."/>
            <person name="Miura S."/>
            <person name="Sibley L.D."/>
            <person name="Okabayashi H."/>
            <person name="Takeuchi T."/>
        </authorList>
    </citation>
    <scope>NUCLEOTIDE SEQUENCE [MRNA]</scope>
    <scope>PARTIAL PROTEIN SEQUENCE</scope>
    <scope>CHARACTERIZATION</scope>
    <source>
        <strain>RH</strain>
    </source>
</reference>
<reference key="2">
    <citation type="journal article" date="1994" name="J. Biol. Chem.">
        <title>Tandemly repeated genes encode nucleoside triphosphate hydrolase isoforms secreted into the parasitophorous vacuole of Toxoplasma gondii.</title>
        <authorList>
            <person name="Bermudes D."/>
            <person name="Peck K.R."/>
            <person name="Afifi M.A."/>
            <person name="Beckers C.J.M."/>
            <person name="Joiner K.A."/>
        </authorList>
    </citation>
    <scope>NUCLEOTIDE SEQUENCE</scope>
    <source>
        <strain>RH</strain>
    </source>
</reference>
<comment type="function">
    <text>May perform an important processing step in the conversion of high energy nucleotides prior to uptake by the parasite and may contribute to intracellular survival and virulence. NTPAse-I has a specific activity 4.5-fold higher than NTPAse-II in hydrolysis of ATP. The primary difference between these isozymes lies in their ability to hydrolyze nucleoside triphosphate versus diphosphate substrates. While NTPAse-II hydrolyzes ATP to ADP and ADP to AMP at almost the same rate, NTPAse-I hydrolyzes ADP to AMP at a much slower rate (0.7% of the rate for ATP).</text>
</comment>
<comment type="catalytic activity">
    <reaction>
        <text>a ribonucleoside 5'-triphosphate + H2O = a ribonucleoside 5'-diphosphate + phosphate + H(+)</text>
        <dbReference type="Rhea" id="RHEA:23680"/>
        <dbReference type="ChEBI" id="CHEBI:15377"/>
        <dbReference type="ChEBI" id="CHEBI:15378"/>
        <dbReference type="ChEBI" id="CHEBI:43474"/>
        <dbReference type="ChEBI" id="CHEBI:57930"/>
        <dbReference type="ChEBI" id="CHEBI:61557"/>
        <dbReference type="EC" id="3.6.1.15"/>
    </reaction>
</comment>
<comment type="subunit">
    <text>Homotetramer.</text>
</comment>
<comment type="subcellular location">
    <subcellularLocation>
        <location>Secreted</location>
    </subcellularLocation>
    <subcellularLocation>
        <location>Parasitophorous vacuole</location>
    </subcellularLocation>
    <text>Found in host cell parasitophorous vacuole.</text>
</comment>
<comment type="similarity">
    <text evidence="3">Belongs to the GDA1/CD39 NTPase family.</text>
</comment>
<keyword id="KW-0002">3D-structure</keyword>
<keyword id="KW-0903">Direct protein sequencing</keyword>
<keyword id="KW-0325">Glycoprotein</keyword>
<keyword id="KW-0378">Hydrolase</keyword>
<keyword id="KW-0964">Secreted</keyword>
<keyword id="KW-0732">Signal</keyword>
<proteinExistence type="evidence at protein level"/>
<dbReference type="EC" id="3.6.1.15"/>
<dbReference type="EMBL" id="L39078">
    <property type="protein sequence ID" value="AAA89203.1"/>
    <property type="molecule type" value="mRNA"/>
</dbReference>
<dbReference type="EMBL" id="U96965">
    <property type="protein sequence ID" value="AAC80188.1"/>
    <property type="molecule type" value="Genomic_DNA"/>
</dbReference>
<dbReference type="PDB" id="4A57">
    <property type="method" value="X-ray"/>
    <property type="resolution" value="2.00 A"/>
    <property type="chains" value="A/B/C/D=26-628"/>
</dbReference>
<dbReference type="PDB" id="4A59">
    <property type="method" value="X-ray"/>
    <property type="resolution" value="2.20 A"/>
    <property type="chains" value="A/B/C/D=26-628"/>
</dbReference>
<dbReference type="PDB" id="4A5A">
    <property type="method" value="X-ray"/>
    <property type="resolution" value="2.85 A"/>
    <property type="chains" value="A/B/C/D=26-628"/>
</dbReference>
<dbReference type="PDBsum" id="4A57"/>
<dbReference type="PDBsum" id="4A59"/>
<dbReference type="PDBsum" id="4A5A"/>
<dbReference type="SMR" id="Q27893"/>
<dbReference type="GlyCosmos" id="Q27893">
    <property type="glycosylation" value="1 site, No reported glycans"/>
</dbReference>
<dbReference type="VEuPathDB" id="ToxoDB:TGARI_371290"/>
<dbReference type="VEuPathDB" id="ToxoDB:TGCAST_358870"/>
<dbReference type="VEuPathDB" id="ToxoDB:TGCOUG_395210"/>
<dbReference type="VEuPathDB" id="ToxoDB:TGDOM2_278878"/>
<dbReference type="VEuPathDB" id="ToxoDB:TGDOM2_400630"/>
<dbReference type="VEuPathDB" id="ToxoDB:TGFOU_278882"/>
<dbReference type="VEuPathDB" id="ToxoDB:TGGT1_277270"/>
<dbReference type="VEuPathDB" id="ToxoDB:TGGT1_408820"/>
<dbReference type="VEuPathDB" id="ToxoDB:TGMAS_363610"/>
<dbReference type="VEuPathDB" id="ToxoDB:TGMAS_364050"/>
<dbReference type="VEuPathDB" id="ToxoDB:TGME49_278882"/>
<dbReference type="VEuPathDB" id="ToxoDB:TGP89_277720"/>
<dbReference type="VEuPathDB" id="ToxoDB:TGPRC2_358870"/>
<dbReference type="VEuPathDB" id="ToxoDB:TGRH88_066180"/>
<dbReference type="VEuPathDB" id="ToxoDB:TGRUB_278882"/>
<dbReference type="VEuPathDB" id="ToxoDB:TGVAND_278882"/>
<dbReference type="VEuPathDB" id="ToxoDB:TGVEG_277270"/>
<dbReference type="VEuPathDB" id="ToxoDB:TGVEG_278878"/>
<dbReference type="BRENDA" id="3.6.1.15">
    <property type="organism ID" value="6411"/>
</dbReference>
<dbReference type="EvolutionaryTrace" id="Q27893"/>
<dbReference type="GO" id="GO:0016020">
    <property type="term" value="C:membrane"/>
    <property type="evidence" value="ECO:0007669"/>
    <property type="project" value="TreeGrafter"/>
</dbReference>
<dbReference type="GO" id="GO:0020003">
    <property type="term" value="C:symbiont-containing vacuole"/>
    <property type="evidence" value="ECO:0007669"/>
    <property type="project" value="UniProtKB-SubCell"/>
</dbReference>
<dbReference type="GO" id="GO:0017110">
    <property type="term" value="F:nucleoside diphosphate phosphatase activity"/>
    <property type="evidence" value="ECO:0007669"/>
    <property type="project" value="TreeGrafter"/>
</dbReference>
<dbReference type="GO" id="GO:0017111">
    <property type="term" value="F:ribonucleoside triphosphate phosphatase activity"/>
    <property type="evidence" value="ECO:0007669"/>
    <property type="project" value="UniProtKB-EC"/>
</dbReference>
<dbReference type="GO" id="GO:0009134">
    <property type="term" value="P:nucleoside diphosphate catabolic process"/>
    <property type="evidence" value="ECO:0007669"/>
    <property type="project" value="TreeGrafter"/>
</dbReference>
<dbReference type="CDD" id="cd24037">
    <property type="entry name" value="ASKHA_NBD_TgNTPase-like"/>
    <property type="match status" value="1"/>
</dbReference>
<dbReference type="Gene3D" id="3.30.420.530">
    <property type="match status" value="1"/>
</dbReference>
<dbReference type="Gene3D" id="3.30.420.540">
    <property type="match status" value="1"/>
</dbReference>
<dbReference type="InterPro" id="IPR000407">
    <property type="entry name" value="GDA1_CD39_NTPase"/>
</dbReference>
<dbReference type="InterPro" id="IPR017227">
    <property type="entry name" value="NTPase_alveloata"/>
</dbReference>
<dbReference type="PANTHER" id="PTHR11782">
    <property type="entry name" value="ADENOSINE/GUANOSINE DIPHOSPHATASE"/>
    <property type="match status" value="1"/>
</dbReference>
<dbReference type="PANTHER" id="PTHR11782:SF83">
    <property type="entry name" value="GUANOSINE-DIPHOSPHATASE"/>
    <property type="match status" value="1"/>
</dbReference>
<dbReference type="Pfam" id="PF01150">
    <property type="entry name" value="GDA1_CD39"/>
    <property type="match status" value="1"/>
</dbReference>
<dbReference type="PIRSF" id="PIRSF037506">
    <property type="entry name" value="NTPase"/>
    <property type="match status" value="1"/>
</dbReference>
<dbReference type="PROSITE" id="PS01238">
    <property type="entry name" value="GDA1_CD39_NTPASE"/>
    <property type="match status" value="1"/>
</dbReference>
<protein>
    <recommendedName>
        <fullName>Nucleoside-triphosphatase 1</fullName>
        <ecNumber>3.6.1.15</ecNumber>
    </recommendedName>
    <alternativeName>
        <fullName>NTPase-I</fullName>
    </alternativeName>
    <alternativeName>
        <fullName>Nucleoside triphosphate hydrolase 1</fullName>
    </alternativeName>
    <alternativeName>
        <fullName>Nucleoside-triphosphatase I</fullName>
    </alternativeName>
</protein>
<accession>Q27893</accession>
<organism>
    <name type="scientific">Toxoplasma gondii</name>
    <dbReference type="NCBI Taxonomy" id="5811"/>
    <lineage>
        <taxon>Eukaryota</taxon>
        <taxon>Sar</taxon>
        <taxon>Alveolata</taxon>
        <taxon>Apicomplexa</taxon>
        <taxon>Conoidasida</taxon>
        <taxon>Coccidia</taxon>
        <taxon>Eucoccidiorida</taxon>
        <taxon>Eimeriorina</taxon>
        <taxon>Sarcocystidae</taxon>
        <taxon>Toxoplasma</taxon>
    </lineage>
</organism>
<gene>
    <name type="primary">NTP3</name>
</gene>
<name>NTP1_TOXGO</name>
<sequence length="628" mass="69159">MWLPVYVPLLLVFGVSLSLPQGSLGTDSSSLRGVDADTEKRINVGKKHLQTLRNLETRCHDSLQALVVIDAGSSSTRTNVFLAKTRSCPNKGRSIDPDSIQLIGAGKRFAGLRVVLEEWLDTYAGKDWESRPVDARLLFQYVPQMHEGAKKLMQLLEEDTVAILDSQLNEKQKVQVKALGIPVMLCSTAGVRDFHEWYRDALFVLLRHLINNPSPAHGYKFFTNPFWTRPITGAEEGLFAFITLNHLSRRLGEDPARCMIDEYGVKQCRNDLAGVVEVGGASAQIVFPLQEGTVLPSSVRAVNLQRERLLPERYPSADVVSVSFMQLGMASSAGLFLKELCSNDEFLQGGICSNPCLFKGFQQSCSAGEVEVRPDGSASVNEDVRKNRLKPLATYCSVNNPEISFKVTNEMQCRENSIDPTKPLAERMKIENCSIIKGTGNFDKCVSQVESILVAPKLPLPANIEAASSGFESVDQVFRFASSTAPMIVTGGGMLAAINTLKDHRLLRSDFSGDVEELAEAAREFCSSEVIIRTDGPVIQLPNARGEQKLNSLNFDLCKTMALTVSLLRHMAAGENQPSFIKWEKSIAGPDGKPLADLGWQVGVILHHVLFTEEWGRNAYEAGYSHNL</sequence>